<evidence type="ECO:0000255" key="1">
    <source>
        <dbReference type="HAMAP-Rule" id="MF_00228"/>
    </source>
</evidence>
<keyword id="KW-0067">ATP-binding</keyword>
<keyword id="KW-0418">Kinase</keyword>
<keyword id="KW-0460">Magnesium</keyword>
<keyword id="KW-0479">Metal-binding</keyword>
<keyword id="KW-0547">Nucleotide-binding</keyword>
<keyword id="KW-1185">Reference proteome</keyword>
<keyword id="KW-0784">Thiamine biosynthesis</keyword>
<keyword id="KW-0808">Transferase</keyword>
<organism>
    <name type="scientific">Oleidesulfovibrio alaskensis (strain ATCC BAA-1058 / DSM 17464 / G20)</name>
    <name type="common">Desulfovibrio alaskensis</name>
    <dbReference type="NCBI Taxonomy" id="207559"/>
    <lineage>
        <taxon>Bacteria</taxon>
        <taxon>Pseudomonadati</taxon>
        <taxon>Thermodesulfobacteriota</taxon>
        <taxon>Desulfovibrionia</taxon>
        <taxon>Desulfovibrionales</taxon>
        <taxon>Desulfovibrionaceae</taxon>
        <taxon>Oleidesulfovibrio</taxon>
    </lineage>
</organism>
<sequence>MSEHSFVWDAVQRVRTGAPLVHNITNYVVMNTTANALLAAGASPVMAHAREEVEELAGLCSSLVLNIGTLSKPWIESMFAAGRIAQSRGVPVVLDPVGAGASSLRTWTSLDLLRELNISVLRGNASEILALSGAGSRTKGVDSIHQAADAADAARELAGKFGCVVVVSGAEDLITDGSSDVLVRGGHDMMPRITGMGCTATALVAAHAAVAGSVLDGAAAGMGVMAVAGTMASRKAKGPGSFQMHFIDALYGMQSFDVEAGVEIVR</sequence>
<accession>Q312G9</accession>
<comment type="function">
    <text evidence="1">Catalyzes the phosphorylation of the hydroxyl group of 4-methyl-5-beta-hydroxyethylthiazole (THZ).</text>
</comment>
<comment type="catalytic activity">
    <reaction evidence="1">
        <text>5-(2-hydroxyethyl)-4-methylthiazole + ATP = 4-methyl-5-(2-phosphooxyethyl)-thiazole + ADP + H(+)</text>
        <dbReference type="Rhea" id="RHEA:24212"/>
        <dbReference type="ChEBI" id="CHEBI:15378"/>
        <dbReference type="ChEBI" id="CHEBI:17957"/>
        <dbReference type="ChEBI" id="CHEBI:30616"/>
        <dbReference type="ChEBI" id="CHEBI:58296"/>
        <dbReference type="ChEBI" id="CHEBI:456216"/>
        <dbReference type="EC" id="2.7.1.50"/>
    </reaction>
</comment>
<comment type="cofactor">
    <cofactor evidence="1">
        <name>Mg(2+)</name>
        <dbReference type="ChEBI" id="CHEBI:18420"/>
    </cofactor>
</comment>
<comment type="pathway">
    <text evidence="1">Cofactor biosynthesis; thiamine diphosphate biosynthesis; 4-methyl-5-(2-phosphoethyl)-thiazole from 5-(2-hydroxyethyl)-4-methylthiazole: step 1/1.</text>
</comment>
<comment type="similarity">
    <text evidence="1">Belongs to the Thz kinase family.</text>
</comment>
<reference key="1">
    <citation type="journal article" date="2011" name="J. Bacteriol.">
        <title>Complete genome sequence and updated annotation of Desulfovibrio alaskensis G20.</title>
        <authorList>
            <person name="Hauser L.J."/>
            <person name="Land M.L."/>
            <person name="Brown S.D."/>
            <person name="Larimer F."/>
            <person name="Keller K.L."/>
            <person name="Rapp-Giles B.J."/>
            <person name="Price M.N."/>
            <person name="Lin M."/>
            <person name="Bruce D.C."/>
            <person name="Detter J.C."/>
            <person name="Tapia R."/>
            <person name="Han C.S."/>
            <person name="Goodwin L.A."/>
            <person name="Cheng J.F."/>
            <person name="Pitluck S."/>
            <person name="Copeland A."/>
            <person name="Lucas S."/>
            <person name="Nolan M."/>
            <person name="Lapidus A.L."/>
            <person name="Palumbo A.V."/>
            <person name="Wall J.D."/>
        </authorList>
    </citation>
    <scope>NUCLEOTIDE SEQUENCE [LARGE SCALE GENOMIC DNA]</scope>
    <source>
        <strain>ATCC BAA-1058 / DSM 17464 / G20</strain>
    </source>
</reference>
<protein>
    <recommendedName>
        <fullName evidence="1">Hydroxyethylthiazole kinase</fullName>
        <ecNumber evidence="1">2.7.1.50</ecNumber>
    </recommendedName>
    <alternativeName>
        <fullName evidence="1">4-methyl-5-beta-hydroxyethylthiazole kinase</fullName>
        <shortName evidence="1">TH kinase</shortName>
        <shortName evidence="1">Thz kinase</shortName>
    </alternativeName>
</protein>
<dbReference type="EC" id="2.7.1.50" evidence="1"/>
<dbReference type="EMBL" id="CP000112">
    <property type="protein sequence ID" value="ABB38177.1"/>
    <property type="molecule type" value="Genomic_DNA"/>
</dbReference>
<dbReference type="RefSeq" id="WP_011367353.1">
    <property type="nucleotide sequence ID" value="NC_007519.1"/>
</dbReference>
<dbReference type="SMR" id="Q312G9"/>
<dbReference type="STRING" id="207559.Dde_1378"/>
<dbReference type="KEGG" id="dde:Dde_1378"/>
<dbReference type="eggNOG" id="COG2145">
    <property type="taxonomic scope" value="Bacteria"/>
</dbReference>
<dbReference type="HOGENOM" id="CLU_019943_0_1_7"/>
<dbReference type="UniPathway" id="UPA00060">
    <property type="reaction ID" value="UER00139"/>
</dbReference>
<dbReference type="Proteomes" id="UP000002710">
    <property type="component" value="Chromosome"/>
</dbReference>
<dbReference type="GO" id="GO:0005524">
    <property type="term" value="F:ATP binding"/>
    <property type="evidence" value="ECO:0007669"/>
    <property type="project" value="UniProtKB-UniRule"/>
</dbReference>
<dbReference type="GO" id="GO:0004417">
    <property type="term" value="F:hydroxyethylthiazole kinase activity"/>
    <property type="evidence" value="ECO:0007669"/>
    <property type="project" value="UniProtKB-UniRule"/>
</dbReference>
<dbReference type="GO" id="GO:0000287">
    <property type="term" value="F:magnesium ion binding"/>
    <property type="evidence" value="ECO:0007669"/>
    <property type="project" value="UniProtKB-UniRule"/>
</dbReference>
<dbReference type="GO" id="GO:0009228">
    <property type="term" value="P:thiamine biosynthetic process"/>
    <property type="evidence" value="ECO:0007669"/>
    <property type="project" value="UniProtKB-KW"/>
</dbReference>
<dbReference type="GO" id="GO:0009229">
    <property type="term" value="P:thiamine diphosphate biosynthetic process"/>
    <property type="evidence" value="ECO:0007669"/>
    <property type="project" value="UniProtKB-UniRule"/>
</dbReference>
<dbReference type="CDD" id="cd01170">
    <property type="entry name" value="THZ_kinase"/>
    <property type="match status" value="1"/>
</dbReference>
<dbReference type="Gene3D" id="3.40.1190.20">
    <property type="match status" value="1"/>
</dbReference>
<dbReference type="HAMAP" id="MF_00228">
    <property type="entry name" value="Thz_kinase"/>
    <property type="match status" value="1"/>
</dbReference>
<dbReference type="InterPro" id="IPR000417">
    <property type="entry name" value="Hyethyz_kinase"/>
</dbReference>
<dbReference type="InterPro" id="IPR029056">
    <property type="entry name" value="Ribokinase-like"/>
</dbReference>
<dbReference type="NCBIfam" id="NF006830">
    <property type="entry name" value="PRK09355.1"/>
    <property type="match status" value="1"/>
</dbReference>
<dbReference type="NCBIfam" id="TIGR00694">
    <property type="entry name" value="thiM"/>
    <property type="match status" value="1"/>
</dbReference>
<dbReference type="Pfam" id="PF02110">
    <property type="entry name" value="HK"/>
    <property type="match status" value="1"/>
</dbReference>
<dbReference type="PIRSF" id="PIRSF000513">
    <property type="entry name" value="Thz_kinase"/>
    <property type="match status" value="1"/>
</dbReference>
<dbReference type="PRINTS" id="PR01099">
    <property type="entry name" value="HYETHTZKNASE"/>
</dbReference>
<dbReference type="SUPFAM" id="SSF53613">
    <property type="entry name" value="Ribokinase-like"/>
    <property type="match status" value="1"/>
</dbReference>
<proteinExistence type="inferred from homology"/>
<feature type="chain" id="PRO_1000021508" description="Hydroxyethylthiazole kinase">
    <location>
        <begin position="1"/>
        <end position="266"/>
    </location>
</feature>
<feature type="binding site" evidence="1">
    <location>
        <position position="46"/>
    </location>
    <ligand>
        <name>substrate</name>
    </ligand>
</feature>
<feature type="binding site" evidence="1">
    <location>
        <position position="122"/>
    </location>
    <ligand>
        <name>ATP</name>
        <dbReference type="ChEBI" id="CHEBI:30616"/>
    </ligand>
</feature>
<feature type="binding site" evidence="1">
    <location>
        <position position="168"/>
    </location>
    <ligand>
        <name>ATP</name>
        <dbReference type="ChEBI" id="CHEBI:30616"/>
    </ligand>
</feature>
<feature type="binding site" evidence="1">
    <location>
        <position position="195"/>
    </location>
    <ligand>
        <name>substrate</name>
    </ligand>
</feature>
<name>THIM_OLEA2</name>
<gene>
    <name evidence="1" type="primary">thiM</name>
    <name type="ordered locus">Dde_1378</name>
</gene>